<evidence type="ECO:0000255" key="1">
    <source>
        <dbReference type="HAMAP-Rule" id="MF_00121"/>
    </source>
</evidence>
<protein>
    <recommendedName>
        <fullName evidence="1">Aspartyl/glutamyl-tRNA(Asn/Gln) amidotransferase subunit B</fullName>
        <shortName evidence="1">Asp/Glu-ADT subunit B</shortName>
        <ecNumber evidence="1">6.3.5.-</ecNumber>
    </recommendedName>
</protein>
<dbReference type="EC" id="6.3.5.-" evidence="1"/>
<dbReference type="EMBL" id="AP007255">
    <property type="protein sequence ID" value="BAE50388.1"/>
    <property type="molecule type" value="Genomic_DNA"/>
</dbReference>
<dbReference type="RefSeq" id="WP_011383994.1">
    <property type="nucleotide sequence ID" value="NC_007626.1"/>
</dbReference>
<dbReference type="SMR" id="Q2W6Y7"/>
<dbReference type="STRING" id="342108.amb1584"/>
<dbReference type="KEGG" id="mag:amb1584"/>
<dbReference type="HOGENOM" id="CLU_019240_0_0_5"/>
<dbReference type="OrthoDB" id="9804078at2"/>
<dbReference type="Proteomes" id="UP000007058">
    <property type="component" value="Chromosome"/>
</dbReference>
<dbReference type="GO" id="GO:0050566">
    <property type="term" value="F:asparaginyl-tRNA synthase (glutamine-hydrolyzing) activity"/>
    <property type="evidence" value="ECO:0007669"/>
    <property type="project" value="RHEA"/>
</dbReference>
<dbReference type="GO" id="GO:0005524">
    <property type="term" value="F:ATP binding"/>
    <property type="evidence" value="ECO:0007669"/>
    <property type="project" value="UniProtKB-KW"/>
</dbReference>
<dbReference type="GO" id="GO:0050567">
    <property type="term" value="F:glutaminyl-tRNA synthase (glutamine-hydrolyzing) activity"/>
    <property type="evidence" value="ECO:0007669"/>
    <property type="project" value="UniProtKB-UniRule"/>
</dbReference>
<dbReference type="GO" id="GO:0070681">
    <property type="term" value="P:glutaminyl-tRNAGln biosynthesis via transamidation"/>
    <property type="evidence" value="ECO:0007669"/>
    <property type="project" value="TreeGrafter"/>
</dbReference>
<dbReference type="GO" id="GO:0006412">
    <property type="term" value="P:translation"/>
    <property type="evidence" value="ECO:0007669"/>
    <property type="project" value="UniProtKB-UniRule"/>
</dbReference>
<dbReference type="FunFam" id="1.10.10.410:FF:000001">
    <property type="entry name" value="Aspartyl/glutamyl-tRNA(Asn/Gln) amidotransferase subunit B"/>
    <property type="match status" value="1"/>
</dbReference>
<dbReference type="FunFam" id="1.10.150.380:FF:000001">
    <property type="entry name" value="Aspartyl/glutamyl-tRNA(Asn/Gln) amidotransferase subunit B"/>
    <property type="match status" value="1"/>
</dbReference>
<dbReference type="Gene3D" id="1.10.10.410">
    <property type="match status" value="1"/>
</dbReference>
<dbReference type="Gene3D" id="1.10.150.380">
    <property type="entry name" value="GatB domain, N-terminal subdomain"/>
    <property type="match status" value="1"/>
</dbReference>
<dbReference type="HAMAP" id="MF_00121">
    <property type="entry name" value="GatB"/>
    <property type="match status" value="1"/>
</dbReference>
<dbReference type="InterPro" id="IPR017959">
    <property type="entry name" value="Asn/Gln-tRNA_amidoTrfase_suB/E"/>
</dbReference>
<dbReference type="InterPro" id="IPR006075">
    <property type="entry name" value="Asn/Gln-tRNA_Trfase_suB/E_cat"/>
</dbReference>
<dbReference type="InterPro" id="IPR018027">
    <property type="entry name" value="Asn/Gln_amidotransferase"/>
</dbReference>
<dbReference type="InterPro" id="IPR003789">
    <property type="entry name" value="Asn/Gln_tRNA_amidoTrase-B-like"/>
</dbReference>
<dbReference type="InterPro" id="IPR004413">
    <property type="entry name" value="GatB"/>
</dbReference>
<dbReference type="InterPro" id="IPR042114">
    <property type="entry name" value="GatB_C_1"/>
</dbReference>
<dbReference type="InterPro" id="IPR023168">
    <property type="entry name" value="GatB_Yqey_C_2"/>
</dbReference>
<dbReference type="InterPro" id="IPR017958">
    <property type="entry name" value="Gln-tRNA_amidoTrfase_suB_CS"/>
</dbReference>
<dbReference type="InterPro" id="IPR014746">
    <property type="entry name" value="Gln_synth/guanido_kin_cat_dom"/>
</dbReference>
<dbReference type="NCBIfam" id="TIGR00133">
    <property type="entry name" value="gatB"/>
    <property type="match status" value="1"/>
</dbReference>
<dbReference type="NCBIfam" id="NF004012">
    <property type="entry name" value="PRK05477.1-2"/>
    <property type="match status" value="1"/>
</dbReference>
<dbReference type="NCBIfam" id="NF004014">
    <property type="entry name" value="PRK05477.1-4"/>
    <property type="match status" value="1"/>
</dbReference>
<dbReference type="NCBIfam" id="NF004015">
    <property type="entry name" value="PRK05477.1-5"/>
    <property type="match status" value="1"/>
</dbReference>
<dbReference type="PANTHER" id="PTHR11659">
    <property type="entry name" value="GLUTAMYL-TRNA GLN AMIDOTRANSFERASE SUBUNIT B MITOCHONDRIAL AND PROKARYOTIC PET112-RELATED"/>
    <property type="match status" value="1"/>
</dbReference>
<dbReference type="PANTHER" id="PTHR11659:SF0">
    <property type="entry name" value="GLUTAMYL-TRNA(GLN) AMIDOTRANSFERASE SUBUNIT B, MITOCHONDRIAL"/>
    <property type="match status" value="1"/>
</dbReference>
<dbReference type="Pfam" id="PF02934">
    <property type="entry name" value="GatB_N"/>
    <property type="match status" value="1"/>
</dbReference>
<dbReference type="Pfam" id="PF02637">
    <property type="entry name" value="GatB_Yqey"/>
    <property type="match status" value="1"/>
</dbReference>
<dbReference type="SMART" id="SM00845">
    <property type="entry name" value="GatB_Yqey"/>
    <property type="match status" value="1"/>
</dbReference>
<dbReference type="SUPFAM" id="SSF89095">
    <property type="entry name" value="GatB/YqeY motif"/>
    <property type="match status" value="1"/>
</dbReference>
<dbReference type="SUPFAM" id="SSF55931">
    <property type="entry name" value="Glutamine synthetase/guanido kinase"/>
    <property type="match status" value="1"/>
</dbReference>
<dbReference type="PROSITE" id="PS01234">
    <property type="entry name" value="GATB"/>
    <property type="match status" value="1"/>
</dbReference>
<keyword id="KW-0067">ATP-binding</keyword>
<keyword id="KW-0436">Ligase</keyword>
<keyword id="KW-0547">Nucleotide-binding</keyword>
<keyword id="KW-0648">Protein biosynthesis</keyword>
<organism>
    <name type="scientific">Paramagnetospirillum magneticum (strain ATCC 700264 / AMB-1)</name>
    <name type="common">Magnetospirillum magneticum</name>
    <dbReference type="NCBI Taxonomy" id="342108"/>
    <lineage>
        <taxon>Bacteria</taxon>
        <taxon>Pseudomonadati</taxon>
        <taxon>Pseudomonadota</taxon>
        <taxon>Alphaproteobacteria</taxon>
        <taxon>Rhodospirillales</taxon>
        <taxon>Magnetospirillaceae</taxon>
        <taxon>Paramagnetospirillum</taxon>
    </lineage>
</organism>
<reference key="1">
    <citation type="journal article" date="2005" name="DNA Res.">
        <title>Complete genome sequence of the facultative anaerobic magnetotactic bacterium Magnetospirillum sp. strain AMB-1.</title>
        <authorList>
            <person name="Matsunaga T."/>
            <person name="Okamura Y."/>
            <person name="Fukuda Y."/>
            <person name="Wahyudi A.T."/>
            <person name="Murase Y."/>
            <person name="Takeyama H."/>
        </authorList>
    </citation>
    <scope>NUCLEOTIDE SEQUENCE [LARGE SCALE GENOMIC DNA]</scope>
    <source>
        <strain>ATCC 700264 / AMB-1</strain>
    </source>
</reference>
<accession>Q2W6Y7</accession>
<sequence>MAYIIQGETGDWEIVIGLEVHAQVISKAKLFSGAATEFGAEPNTQVSFIDAGFPGMLPVINEVCVEQAVRTGLGLKAKINLTSVFARKNYFYADLPQGYQISQYDQPIVGEGELILDLPDGGTRTVGIERLHLEQDAGKSIHDMHPSKSFIDLNRSGVALMEIVSKPDLRSPEEAGLYLTKLRSILRYLETCDGNMQEGSMRCDANVSVRPVGSTELRTRCEIKNVNSIRFVQQAIEFEARRHIDVYESGGEIRQETRLFDSVKGETRSMRSKEHAHDYRYFPDPDLLPLVIEQSFVDGIKSGLPELPDEKKARFMAEYGLNAYDAGVLVAEKASAEFFETVAKGRDSKMACNWVMGDFFASLNATGKTIENPPVTAANLGQLIDLIKDGTLSGRLAKDVFALMVETGKAPAVLVEERGLKQVTDTGAIEAAVDAVISANPDKVQQVKDGKTALLGWFTGQVMKSTQGKANPAMVNEMLSKKILG</sequence>
<name>GATB_PARM1</name>
<comment type="function">
    <text evidence="1">Allows the formation of correctly charged Asn-tRNA(Asn) or Gln-tRNA(Gln) through the transamidation of misacylated Asp-tRNA(Asn) or Glu-tRNA(Gln) in organisms which lack either or both of asparaginyl-tRNA or glutaminyl-tRNA synthetases. The reaction takes place in the presence of glutamine and ATP through an activated phospho-Asp-tRNA(Asn) or phospho-Glu-tRNA(Gln).</text>
</comment>
<comment type="catalytic activity">
    <reaction evidence="1">
        <text>L-glutamyl-tRNA(Gln) + L-glutamine + ATP + H2O = L-glutaminyl-tRNA(Gln) + L-glutamate + ADP + phosphate + H(+)</text>
        <dbReference type="Rhea" id="RHEA:17521"/>
        <dbReference type="Rhea" id="RHEA-COMP:9681"/>
        <dbReference type="Rhea" id="RHEA-COMP:9684"/>
        <dbReference type="ChEBI" id="CHEBI:15377"/>
        <dbReference type="ChEBI" id="CHEBI:15378"/>
        <dbReference type="ChEBI" id="CHEBI:29985"/>
        <dbReference type="ChEBI" id="CHEBI:30616"/>
        <dbReference type="ChEBI" id="CHEBI:43474"/>
        <dbReference type="ChEBI" id="CHEBI:58359"/>
        <dbReference type="ChEBI" id="CHEBI:78520"/>
        <dbReference type="ChEBI" id="CHEBI:78521"/>
        <dbReference type="ChEBI" id="CHEBI:456216"/>
    </reaction>
</comment>
<comment type="catalytic activity">
    <reaction evidence="1">
        <text>L-aspartyl-tRNA(Asn) + L-glutamine + ATP + H2O = L-asparaginyl-tRNA(Asn) + L-glutamate + ADP + phosphate + 2 H(+)</text>
        <dbReference type="Rhea" id="RHEA:14513"/>
        <dbReference type="Rhea" id="RHEA-COMP:9674"/>
        <dbReference type="Rhea" id="RHEA-COMP:9677"/>
        <dbReference type="ChEBI" id="CHEBI:15377"/>
        <dbReference type="ChEBI" id="CHEBI:15378"/>
        <dbReference type="ChEBI" id="CHEBI:29985"/>
        <dbReference type="ChEBI" id="CHEBI:30616"/>
        <dbReference type="ChEBI" id="CHEBI:43474"/>
        <dbReference type="ChEBI" id="CHEBI:58359"/>
        <dbReference type="ChEBI" id="CHEBI:78515"/>
        <dbReference type="ChEBI" id="CHEBI:78516"/>
        <dbReference type="ChEBI" id="CHEBI:456216"/>
    </reaction>
</comment>
<comment type="subunit">
    <text evidence="1">Heterotrimer of A, B and C subunits.</text>
</comment>
<comment type="similarity">
    <text evidence="1">Belongs to the GatB/GatE family. GatB subfamily.</text>
</comment>
<feature type="chain" id="PRO_0000241236" description="Aspartyl/glutamyl-tRNA(Asn/Gln) amidotransferase subunit B">
    <location>
        <begin position="1"/>
        <end position="485"/>
    </location>
</feature>
<proteinExistence type="inferred from homology"/>
<gene>
    <name evidence="1" type="primary">gatB</name>
    <name type="ordered locus">amb1584</name>
</gene>